<comment type="function">
    <text evidence="1">Required for the assembly and/or stability of the 40S ribosomal subunit. Required for the processing of the 20S rRNA-precursor to mature 18S rRNA in a late step of the maturation of 40S ribosomal subunits. Also functions as a cell surface receptor for laminin. Plays a role in cell adhesion to the basement membrane and in the consequent activation of signaling transduction pathways. May play a role in cell fate determination and tissue morphogenesis.</text>
</comment>
<comment type="subunit">
    <text evidence="1">Monomer (37LRP) and homodimer (67LR). Component of the small ribosomal subunit. Mature ribosomes consist of a small (40S) and a large (60S) subunit. The 40S subunit contains about 33 different proteins and 1 molecule of RNA (18S). The 60S subunit contains about 49 different proteins and 3 molecules of RNA (28S, 5.8S and 5S). Interacts with rps21. Interacts with several laminins including at least lamb1. Interacts with mdk.</text>
</comment>
<comment type="subcellular location">
    <subcellularLocation>
        <location evidence="1">Cell membrane</location>
    </subcellularLocation>
    <subcellularLocation>
        <location evidence="1">Cytoplasm</location>
    </subcellularLocation>
    <subcellularLocation>
        <location evidence="1">Nucleus</location>
    </subcellularLocation>
    <text evidence="1">67LR is found at the surface of the plasma membrane, with its C-terminal laminin-binding domain accessible to extracellular ligands. 37LRP is found at the cell surface, in the cytoplasm and in the nucleus.</text>
</comment>
<comment type="PTM">
    <text evidence="1">Acylated. Acylation may be a prerequisite for conversion of the monomeric 37 kDa laminin receptor precursor (37LRP) to the mature dimeric 67 kDa laminin receptor (67LR), and may provide a mechanism for membrane association.</text>
</comment>
<comment type="PTM">
    <text evidence="1">Cleaved by stromelysin-3 (ST3) at the cell surface. Cleavage by stromelysin-3 may be a mechanism to alter cell-extracellular matrix interactions.</text>
</comment>
<comment type="miscellaneous">
    <text>This protein appears to have acquired a second function as a laminin receptor specifically in the vertebrate lineage.</text>
</comment>
<comment type="similarity">
    <text evidence="1">Belongs to the universal ribosomal protein uS2 family.</text>
</comment>
<comment type="sequence caution" evidence="3">
    <conflict type="frameshift">
        <sequence resource="EMBL-CDS" id="AAT44424"/>
    </conflict>
</comment>
<evidence type="ECO:0000255" key="1">
    <source>
        <dbReference type="HAMAP-Rule" id="MF_03016"/>
    </source>
</evidence>
<evidence type="ECO:0000256" key="2">
    <source>
        <dbReference type="SAM" id="MobiDB-lite"/>
    </source>
</evidence>
<evidence type="ECO:0000305" key="3"/>
<feature type="initiator methionine" description="Removed" evidence="1">
    <location>
        <position position="1"/>
    </location>
</feature>
<feature type="chain" id="PRO_0000371572" description="Small ribosomal subunit protein uS2">
    <location>
        <begin position="2"/>
        <end position="304"/>
    </location>
</feature>
<feature type="repeat" description="[DE]-W-[ST] 1">
    <location>
        <begin position="230"/>
        <end position="232"/>
    </location>
</feature>
<feature type="repeat" description="[DE]-W-[ST] 2">
    <location>
        <begin position="245"/>
        <end position="247"/>
    </location>
</feature>
<feature type="repeat" description="[DE]-W-[ST] 3">
    <location>
        <begin position="275"/>
        <end position="277"/>
    </location>
</feature>
<feature type="repeat" description="[DE]-W-[ST] 4">
    <location>
        <begin position="284"/>
        <end position="286"/>
    </location>
</feature>
<feature type="repeat" description="[DE]-W-[ST] 5">
    <location>
        <begin position="302"/>
        <end position="304"/>
    </location>
</feature>
<feature type="region of interest" description="Laminin-binding" evidence="1">
    <location>
        <begin position="161"/>
        <end position="180"/>
    </location>
</feature>
<feature type="region of interest" description="Laminin-binding" evidence="1">
    <location>
        <begin position="205"/>
        <end position="229"/>
    </location>
</feature>
<feature type="region of interest" description="Laminin-binding" evidence="1">
    <location>
        <begin position="242"/>
        <end position="304"/>
    </location>
</feature>
<feature type="region of interest" description="Disordered" evidence="2">
    <location>
        <begin position="257"/>
        <end position="304"/>
    </location>
</feature>
<feature type="compositionally biased region" description="Polar residues" evidence="2">
    <location>
        <begin position="276"/>
        <end position="293"/>
    </location>
</feature>
<feature type="site" description="Cleavage; by ST3; site 1" evidence="1">
    <location>
        <begin position="115"/>
        <end position="116"/>
    </location>
</feature>
<feature type="site" description="Cleavage; by ST3; site 2" evidence="1">
    <location>
        <begin position="133"/>
        <end position="134"/>
    </location>
</feature>
<feature type="modified residue" description="N-acetylserine" evidence="1">
    <location>
        <position position="2"/>
    </location>
</feature>
<accession>Q4QY71</accession>
<gene>
    <name type="primary">rpsa</name>
</gene>
<sequence>MSGGLDVLQMKEEDVLKFLAAGTHLGGTNLDFQMDQYVYKRKSDGVYIINLKKTWEKLLLAARAIVAIENPADVCVISSRNTGQRAVLKFASATGATTFHGRFTPGTFTNQIQAAFREPRLLIVTDPRADHQPLTEASYVNIPTIALCNTDSPLRYVDIAIPCNNKGHHSVGLMWWMLAREVLRMRGTISREHPWEVMPDLYFYRDPEEIEKEEQAAAEKAVGKEEFQGEWSAPAAEFTQPEVADWSEGVAVPSVPIQQFPAGTPAPAPAVKTEDWSTQPATEDWSTAPTAQASDWGGATSDWS</sequence>
<name>RSSA_SPAAU</name>
<organism>
    <name type="scientific">Sparus aurata</name>
    <name type="common">Gilthead sea bream</name>
    <dbReference type="NCBI Taxonomy" id="8175"/>
    <lineage>
        <taxon>Eukaryota</taxon>
        <taxon>Metazoa</taxon>
        <taxon>Chordata</taxon>
        <taxon>Craniata</taxon>
        <taxon>Vertebrata</taxon>
        <taxon>Euteleostomi</taxon>
        <taxon>Actinopterygii</taxon>
        <taxon>Neopterygii</taxon>
        <taxon>Teleostei</taxon>
        <taxon>Neoteleostei</taxon>
        <taxon>Acanthomorphata</taxon>
        <taxon>Eupercaria</taxon>
        <taxon>Spariformes</taxon>
        <taxon>Sparidae</taxon>
        <taxon>Sparus</taxon>
    </lineage>
</organism>
<proteinExistence type="evidence at transcript level"/>
<reference key="1">
    <citation type="journal article" date="2005" name="Aquaculture">
        <title>Comparative analysis and characterization of expressed sequence tags in gilthead sea bream (Sparus aurata) liver and embryos.</title>
        <authorList>
            <person name="Sarropoulou E."/>
            <person name="Power D.M."/>
            <person name="Magoulas A."/>
            <person name="Geisler R."/>
            <person name="Kotoulas G."/>
        </authorList>
        <dbReference type="AGRICOLA" id="IND43711475"/>
    </citation>
    <scope>NUCLEOTIDE SEQUENCE [MRNA]</scope>
</reference>
<protein>
    <recommendedName>
        <fullName evidence="1">Small ribosomal subunit protein uS2</fullName>
    </recommendedName>
    <alternativeName>
        <fullName evidence="1">37 kDa laminin receptor precursor</fullName>
        <shortName evidence="1">37LRP</shortName>
    </alternativeName>
    <alternativeName>
        <fullName evidence="1">37/67 kDa laminin receptor</fullName>
        <shortName evidence="1">LRP/LR</shortName>
    </alternativeName>
    <alternativeName>
        <fullName evidence="3">40S ribosomal protein SA</fullName>
    </alternativeName>
    <alternativeName>
        <fullName evidence="1">67 kDa laminin receptor</fullName>
        <shortName evidence="1">67LR</shortName>
    </alternativeName>
    <alternativeName>
        <fullName evidence="1">Laminin receptor 1</fullName>
        <shortName evidence="1">LamR</shortName>
    </alternativeName>
    <alternativeName>
        <fullName evidence="1">Laminin-binding protein precursor p40</fullName>
        <shortName evidence="1">LBP/p40</shortName>
    </alternativeName>
</protein>
<dbReference type="EMBL" id="AY550956">
    <property type="protein sequence ID" value="AAT44424.1"/>
    <property type="status" value="ALT_FRAME"/>
    <property type="molecule type" value="mRNA"/>
</dbReference>
<dbReference type="SMR" id="Q4QY71"/>
<dbReference type="FunCoup" id="Q4QY71">
    <property type="interactions" value="1879"/>
</dbReference>
<dbReference type="Ensembl" id="ENSSAUT00010065427.1">
    <property type="protein sequence ID" value="ENSSAUP00010062394.1"/>
    <property type="gene ID" value="ENSSAUG00010025190.1"/>
</dbReference>
<dbReference type="GeneTree" id="ENSGT00950000183099"/>
<dbReference type="InParanoid" id="Q4QY71"/>
<dbReference type="OMA" id="VKNFFEP"/>
<dbReference type="OrthoDB" id="414863at2759"/>
<dbReference type="Proteomes" id="UP000472265">
    <property type="component" value="Chromosome 23"/>
</dbReference>
<dbReference type="GO" id="GO:0022627">
    <property type="term" value="C:cytosolic small ribosomal subunit"/>
    <property type="evidence" value="ECO:0007669"/>
    <property type="project" value="UniProtKB-UniRule"/>
</dbReference>
<dbReference type="GO" id="GO:0005634">
    <property type="term" value="C:nucleus"/>
    <property type="evidence" value="ECO:0007669"/>
    <property type="project" value="UniProtKB-SubCell"/>
</dbReference>
<dbReference type="GO" id="GO:0005886">
    <property type="term" value="C:plasma membrane"/>
    <property type="evidence" value="ECO:0007669"/>
    <property type="project" value="UniProtKB-SubCell"/>
</dbReference>
<dbReference type="GO" id="GO:0043236">
    <property type="term" value="F:laminin binding"/>
    <property type="evidence" value="ECO:0007669"/>
    <property type="project" value="UniProtKB-UniRule"/>
</dbReference>
<dbReference type="GO" id="GO:0005055">
    <property type="term" value="F:laminin receptor activity"/>
    <property type="evidence" value="ECO:0007669"/>
    <property type="project" value="UniProtKB-UniRule"/>
</dbReference>
<dbReference type="GO" id="GO:0003735">
    <property type="term" value="F:structural constituent of ribosome"/>
    <property type="evidence" value="ECO:0007669"/>
    <property type="project" value="UniProtKB-UniRule"/>
</dbReference>
<dbReference type="GO" id="GO:0000028">
    <property type="term" value="P:ribosomal small subunit assembly"/>
    <property type="evidence" value="ECO:0007669"/>
    <property type="project" value="UniProtKB-UniRule"/>
</dbReference>
<dbReference type="GO" id="GO:0006412">
    <property type="term" value="P:translation"/>
    <property type="evidence" value="ECO:0007669"/>
    <property type="project" value="UniProtKB-UniRule"/>
</dbReference>
<dbReference type="CDD" id="cd01425">
    <property type="entry name" value="RPS2"/>
    <property type="match status" value="1"/>
</dbReference>
<dbReference type="FunFam" id="3.40.50.10490:FF:000012">
    <property type="entry name" value="40S ribosomal protein SA"/>
    <property type="match status" value="1"/>
</dbReference>
<dbReference type="Gene3D" id="3.40.50.10490">
    <property type="entry name" value="Glucose-6-phosphate isomerase like protein, domain 1"/>
    <property type="match status" value="1"/>
</dbReference>
<dbReference type="HAMAP" id="MF_03015">
    <property type="entry name" value="Ribosomal_S2_euk"/>
    <property type="match status" value="1"/>
</dbReference>
<dbReference type="HAMAP" id="MF_03016">
    <property type="entry name" value="Ribosomal_S2_laminin_receptor"/>
    <property type="match status" value="1"/>
</dbReference>
<dbReference type="InterPro" id="IPR001865">
    <property type="entry name" value="Ribosomal_uS2"/>
</dbReference>
<dbReference type="InterPro" id="IPR032281">
    <property type="entry name" value="Ribosomal_uS2_C"/>
</dbReference>
<dbReference type="InterPro" id="IPR018130">
    <property type="entry name" value="Ribosomal_uS2_CS"/>
</dbReference>
<dbReference type="InterPro" id="IPR027498">
    <property type="entry name" value="Ribosomal_uS2_euk"/>
</dbReference>
<dbReference type="InterPro" id="IPR005707">
    <property type="entry name" value="Ribosomal_uS2_euk/arc"/>
</dbReference>
<dbReference type="InterPro" id="IPR023591">
    <property type="entry name" value="Ribosomal_uS2_flav_dom_sf"/>
</dbReference>
<dbReference type="InterPro" id="IPR027504">
    <property type="entry name" value="Ribosomal_uS2_vert"/>
</dbReference>
<dbReference type="NCBIfam" id="TIGR01012">
    <property type="entry name" value="uS2_euk_arch"/>
    <property type="match status" value="1"/>
</dbReference>
<dbReference type="PANTHER" id="PTHR11489">
    <property type="entry name" value="40S RIBOSOMAL PROTEIN SA"/>
    <property type="match status" value="1"/>
</dbReference>
<dbReference type="Pfam" id="PF16122">
    <property type="entry name" value="40S_SA_C"/>
    <property type="match status" value="1"/>
</dbReference>
<dbReference type="Pfam" id="PF00318">
    <property type="entry name" value="Ribosomal_S2"/>
    <property type="match status" value="2"/>
</dbReference>
<dbReference type="PRINTS" id="PR00395">
    <property type="entry name" value="RIBOSOMALS2"/>
</dbReference>
<dbReference type="SUPFAM" id="SSF52313">
    <property type="entry name" value="Ribosomal protein S2"/>
    <property type="match status" value="1"/>
</dbReference>
<dbReference type="PROSITE" id="PS00962">
    <property type="entry name" value="RIBOSOMAL_S2_1"/>
    <property type="match status" value="1"/>
</dbReference>
<dbReference type="PROSITE" id="PS00963">
    <property type="entry name" value="RIBOSOMAL_S2_2"/>
    <property type="match status" value="1"/>
</dbReference>
<keyword id="KW-0007">Acetylation</keyword>
<keyword id="KW-1003">Cell membrane</keyword>
<keyword id="KW-0963">Cytoplasm</keyword>
<keyword id="KW-0472">Membrane</keyword>
<keyword id="KW-0539">Nucleus</keyword>
<keyword id="KW-0675">Receptor</keyword>
<keyword id="KW-1185">Reference proteome</keyword>
<keyword id="KW-0677">Repeat</keyword>
<keyword id="KW-0687">Ribonucleoprotein</keyword>
<keyword id="KW-0689">Ribosomal protein</keyword>